<evidence type="ECO:0000255" key="1">
    <source>
        <dbReference type="HAMAP-Rule" id="MF_00139"/>
    </source>
</evidence>
<evidence type="ECO:0000255" key="2">
    <source>
        <dbReference type="PROSITE-ProRule" id="PRU01202"/>
    </source>
</evidence>
<name>PUR9_MAGMM</name>
<sequence length="532" mass="57270">MAKIKRALISVSDKTGLVPFCQGLAEHGVSFLSTGGTARLLRESGLDVMDVSEFTGFPEMLDGRVKTLHPKVHGGLLGLRDNASHQQQMGEHGIEPIDMVVVNLYPFEATVAKEGCTLEEAIENIDIGGPSMLRSAAKNYRSVTVVTDPADYARVLESLRAHDGQCDAGLNAQLARKVYARTAAYDAAISNWLSALDNEGRPGAFPETYTVQFKKVQGMRYGENPHQSAAFYAESPPSEEASLATATQLQGKELSFNNIHDANGALELVKEFSKPAAVVVKHANPCGVAVHDGDLLAAYRMARDTDPVSAFGGIIALNRCVDVAVAKEIAQLFVEVIIAPEYDEQALELFATKKNLRLLRVPNIGVATAVSTMDLKRVTGGLLLQDRDLKQLPEGSLKVVTERAPSEAEMRDLLFAWKVVKHVKSNAIVYAKEQRTLGVGAGQMSRVDASRIAVWKAQDTAHTAGLRENPLLGAAMASDAFFPFRDGVDAAAKAGAKAVIQPGGSVRDEEVIAAANEHGMAMVFTGMRHFKH</sequence>
<keyword id="KW-0378">Hydrolase</keyword>
<keyword id="KW-0511">Multifunctional enzyme</keyword>
<keyword id="KW-0658">Purine biosynthesis</keyword>
<keyword id="KW-1185">Reference proteome</keyword>
<keyword id="KW-0808">Transferase</keyword>
<comment type="catalytic activity">
    <reaction evidence="1">
        <text>(6R)-10-formyltetrahydrofolate + 5-amino-1-(5-phospho-beta-D-ribosyl)imidazole-4-carboxamide = 5-formamido-1-(5-phospho-D-ribosyl)imidazole-4-carboxamide + (6S)-5,6,7,8-tetrahydrofolate</text>
        <dbReference type="Rhea" id="RHEA:22192"/>
        <dbReference type="ChEBI" id="CHEBI:57453"/>
        <dbReference type="ChEBI" id="CHEBI:58467"/>
        <dbReference type="ChEBI" id="CHEBI:58475"/>
        <dbReference type="ChEBI" id="CHEBI:195366"/>
        <dbReference type="EC" id="2.1.2.3"/>
    </reaction>
</comment>
<comment type="catalytic activity">
    <reaction evidence="1">
        <text>IMP + H2O = 5-formamido-1-(5-phospho-D-ribosyl)imidazole-4-carboxamide</text>
        <dbReference type="Rhea" id="RHEA:18445"/>
        <dbReference type="ChEBI" id="CHEBI:15377"/>
        <dbReference type="ChEBI" id="CHEBI:58053"/>
        <dbReference type="ChEBI" id="CHEBI:58467"/>
        <dbReference type="EC" id="3.5.4.10"/>
    </reaction>
</comment>
<comment type="pathway">
    <text evidence="1">Purine metabolism; IMP biosynthesis via de novo pathway; 5-formamido-1-(5-phospho-D-ribosyl)imidazole-4-carboxamide from 5-amino-1-(5-phospho-D-ribosyl)imidazole-4-carboxamide (10-formyl THF route): step 1/1.</text>
</comment>
<comment type="pathway">
    <text evidence="1">Purine metabolism; IMP biosynthesis via de novo pathway; IMP from 5-formamido-1-(5-phospho-D-ribosyl)imidazole-4-carboxamide: step 1/1.</text>
</comment>
<comment type="domain">
    <text evidence="1">The IMP cyclohydrolase activity resides in the N-terminal region.</text>
</comment>
<comment type="similarity">
    <text evidence="1">Belongs to the PurH family.</text>
</comment>
<proteinExistence type="inferred from homology"/>
<dbReference type="EC" id="2.1.2.3" evidence="1"/>
<dbReference type="EC" id="3.5.4.10" evidence="1"/>
<dbReference type="EMBL" id="CP000471">
    <property type="protein sequence ID" value="ABK45953.1"/>
    <property type="molecule type" value="Genomic_DNA"/>
</dbReference>
<dbReference type="RefSeq" id="WP_011715009.1">
    <property type="nucleotide sequence ID" value="NC_008576.1"/>
</dbReference>
<dbReference type="SMR" id="A0LDB0"/>
<dbReference type="STRING" id="156889.Mmc1_3468"/>
<dbReference type="KEGG" id="mgm:Mmc1_3468"/>
<dbReference type="eggNOG" id="COG0138">
    <property type="taxonomic scope" value="Bacteria"/>
</dbReference>
<dbReference type="HOGENOM" id="CLU_016316_5_2_5"/>
<dbReference type="OrthoDB" id="9802065at2"/>
<dbReference type="UniPathway" id="UPA00074">
    <property type="reaction ID" value="UER00133"/>
</dbReference>
<dbReference type="UniPathway" id="UPA00074">
    <property type="reaction ID" value="UER00135"/>
</dbReference>
<dbReference type="Proteomes" id="UP000002586">
    <property type="component" value="Chromosome"/>
</dbReference>
<dbReference type="GO" id="GO:0005829">
    <property type="term" value="C:cytosol"/>
    <property type="evidence" value="ECO:0007669"/>
    <property type="project" value="TreeGrafter"/>
</dbReference>
<dbReference type="GO" id="GO:0003937">
    <property type="term" value="F:IMP cyclohydrolase activity"/>
    <property type="evidence" value="ECO:0007669"/>
    <property type="project" value="UniProtKB-UniRule"/>
</dbReference>
<dbReference type="GO" id="GO:0004643">
    <property type="term" value="F:phosphoribosylaminoimidazolecarboxamide formyltransferase activity"/>
    <property type="evidence" value="ECO:0007669"/>
    <property type="project" value="UniProtKB-UniRule"/>
</dbReference>
<dbReference type="GO" id="GO:0006189">
    <property type="term" value="P:'de novo' IMP biosynthetic process"/>
    <property type="evidence" value="ECO:0007669"/>
    <property type="project" value="UniProtKB-UniRule"/>
</dbReference>
<dbReference type="CDD" id="cd01421">
    <property type="entry name" value="IMPCH"/>
    <property type="match status" value="1"/>
</dbReference>
<dbReference type="FunFam" id="3.40.140.20:FF:000001">
    <property type="entry name" value="Bifunctional purine biosynthesis protein PurH"/>
    <property type="match status" value="1"/>
</dbReference>
<dbReference type="FunFam" id="3.40.140.20:FF:000002">
    <property type="entry name" value="Bifunctional purine biosynthesis protein PurH"/>
    <property type="match status" value="1"/>
</dbReference>
<dbReference type="FunFam" id="3.40.50.1380:FF:000001">
    <property type="entry name" value="Bifunctional purine biosynthesis protein PurH"/>
    <property type="match status" value="1"/>
</dbReference>
<dbReference type="Gene3D" id="3.40.140.20">
    <property type="match status" value="2"/>
</dbReference>
<dbReference type="Gene3D" id="3.40.50.1380">
    <property type="entry name" value="Methylglyoxal synthase-like domain"/>
    <property type="match status" value="1"/>
</dbReference>
<dbReference type="HAMAP" id="MF_00139">
    <property type="entry name" value="PurH"/>
    <property type="match status" value="1"/>
</dbReference>
<dbReference type="InterPro" id="IPR024051">
    <property type="entry name" value="AICAR_Tfase_dup_dom_sf"/>
</dbReference>
<dbReference type="InterPro" id="IPR016193">
    <property type="entry name" value="Cytidine_deaminase-like"/>
</dbReference>
<dbReference type="InterPro" id="IPR011607">
    <property type="entry name" value="MGS-like_dom"/>
</dbReference>
<dbReference type="InterPro" id="IPR036914">
    <property type="entry name" value="MGS-like_dom_sf"/>
</dbReference>
<dbReference type="InterPro" id="IPR002695">
    <property type="entry name" value="PurH-like"/>
</dbReference>
<dbReference type="NCBIfam" id="NF002049">
    <property type="entry name" value="PRK00881.1"/>
    <property type="match status" value="1"/>
</dbReference>
<dbReference type="NCBIfam" id="TIGR00355">
    <property type="entry name" value="purH"/>
    <property type="match status" value="1"/>
</dbReference>
<dbReference type="PANTHER" id="PTHR11692:SF0">
    <property type="entry name" value="BIFUNCTIONAL PURINE BIOSYNTHESIS PROTEIN ATIC"/>
    <property type="match status" value="1"/>
</dbReference>
<dbReference type="PANTHER" id="PTHR11692">
    <property type="entry name" value="BIFUNCTIONAL PURINE BIOSYNTHESIS PROTEIN PURH"/>
    <property type="match status" value="1"/>
</dbReference>
<dbReference type="Pfam" id="PF01808">
    <property type="entry name" value="AICARFT_IMPCHas"/>
    <property type="match status" value="1"/>
</dbReference>
<dbReference type="Pfam" id="PF02142">
    <property type="entry name" value="MGS"/>
    <property type="match status" value="1"/>
</dbReference>
<dbReference type="PIRSF" id="PIRSF000414">
    <property type="entry name" value="AICARFT_IMPCHas"/>
    <property type="match status" value="1"/>
</dbReference>
<dbReference type="SMART" id="SM00798">
    <property type="entry name" value="AICARFT_IMPCHas"/>
    <property type="match status" value="1"/>
</dbReference>
<dbReference type="SMART" id="SM00851">
    <property type="entry name" value="MGS"/>
    <property type="match status" value="1"/>
</dbReference>
<dbReference type="SUPFAM" id="SSF53927">
    <property type="entry name" value="Cytidine deaminase-like"/>
    <property type="match status" value="1"/>
</dbReference>
<dbReference type="SUPFAM" id="SSF52335">
    <property type="entry name" value="Methylglyoxal synthase-like"/>
    <property type="match status" value="1"/>
</dbReference>
<dbReference type="PROSITE" id="PS51855">
    <property type="entry name" value="MGS"/>
    <property type="match status" value="1"/>
</dbReference>
<gene>
    <name evidence="1" type="primary">purH</name>
    <name type="ordered locus">Mmc1_3468</name>
</gene>
<accession>A0LDB0</accession>
<reference key="1">
    <citation type="journal article" date="2009" name="Appl. Environ. Microbiol.">
        <title>Complete genome sequence of the chemolithoautotrophic marine magnetotactic coccus strain MC-1.</title>
        <authorList>
            <person name="Schubbe S."/>
            <person name="Williams T.J."/>
            <person name="Xie G."/>
            <person name="Kiss H.E."/>
            <person name="Brettin T.S."/>
            <person name="Martinez D."/>
            <person name="Ross C.A."/>
            <person name="Schuler D."/>
            <person name="Cox B.L."/>
            <person name="Nealson K.H."/>
            <person name="Bazylinski D.A."/>
        </authorList>
    </citation>
    <scope>NUCLEOTIDE SEQUENCE [LARGE SCALE GENOMIC DNA]</scope>
    <source>
        <strain>ATCC BAA-1437 / JCM 17883 / MC-1</strain>
    </source>
</reference>
<feature type="chain" id="PRO_1000192978" description="Bifunctional purine biosynthesis protein PurH">
    <location>
        <begin position="1"/>
        <end position="532"/>
    </location>
</feature>
<feature type="domain" description="MGS-like" evidence="2">
    <location>
        <begin position="1"/>
        <end position="147"/>
    </location>
</feature>
<protein>
    <recommendedName>
        <fullName evidence="1">Bifunctional purine biosynthesis protein PurH</fullName>
    </recommendedName>
    <domain>
        <recommendedName>
            <fullName evidence="1">Phosphoribosylaminoimidazolecarboxamide formyltransferase</fullName>
            <ecNumber evidence="1">2.1.2.3</ecNumber>
        </recommendedName>
        <alternativeName>
            <fullName evidence="1">AICAR transformylase</fullName>
        </alternativeName>
    </domain>
    <domain>
        <recommendedName>
            <fullName evidence="1">IMP cyclohydrolase</fullName>
            <ecNumber evidence="1">3.5.4.10</ecNumber>
        </recommendedName>
        <alternativeName>
            <fullName evidence="1">ATIC</fullName>
        </alternativeName>
        <alternativeName>
            <fullName evidence="1">IMP synthase</fullName>
        </alternativeName>
        <alternativeName>
            <fullName evidence="1">Inosinicase</fullName>
        </alternativeName>
    </domain>
</protein>
<organism>
    <name type="scientific">Magnetococcus marinus (strain ATCC BAA-1437 / JCM 17883 / MC-1)</name>
    <dbReference type="NCBI Taxonomy" id="156889"/>
    <lineage>
        <taxon>Bacteria</taxon>
        <taxon>Pseudomonadati</taxon>
        <taxon>Pseudomonadota</taxon>
        <taxon>Alphaproteobacteria</taxon>
        <taxon>Magnetococcales</taxon>
        <taxon>Magnetococcaceae</taxon>
        <taxon>Magnetococcus</taxon>
    </lineage>
</organism>